<gene>
    <name type="primary">Slx4</name>
    <name type="synonym">Btbd12</name>
</gene>
<keyword id="KW-0227">DNA damage</keyword>
<keyword id="KW-0233">DNA recombination</keyword>
<keyword id="KW-0234">DNA repair</keyword>
<keyword id="KW-1017">Isopeptide bond</keyword>
<keyword id="KW-0479">Metal-binding</keyword>
<keyword id="KW-0539">Nucleus</keyword>
<keyword id="KW-0597">Phosphoprotein</keyword>
<keyword id="KW-1185">Reference proteome</keyword>
<keyword id="KW-0677">Repeat</keyword>
<keyword id="KW-0832">Ubl conjugation</keyword>
<keyword id="KW-0862">Zinc</keyword>
<keyword id="KW-0863">Zinc-finger</keyword>
<dbReference type="EMBL" id="BC065125">
    <property type="protein sequence ID" value="AAH65125.1"/>
    <property type="molecule type" value="mRNA"/>
</dbReference>
<dbReference type="CCDS" id="CCDS37240.1"/>
<dbReference type="RefSeq" id="NP_803423.2">
    <property type="nucleotide sequence ID" value="NM_177472.5"/>
</dbReference>
<dbReference type="SMR" id="Q6P1D7"/>
<dbReference type="BioGRID" id="206862">
    <property type="interactions" value="14"/>
</dbReference>
<dbReference type="ComplexPortal" id="CPX-498">
    <property type="entry name" value="Slx4-Terf2 complex"/>
</dbReference>
<dbReference type="FunCoup" id="Q6P1D7">
    <property type="interactions" value="1760"/>
</dbReference>
<dbReference type="STRING" id="10090.ENSMUSP00000038871"/>
<dbReference type="CarbonylDB" id="Q6P1D7"/>
<dbReference type="GlyGen" id="Q6P1D7">
    <property type="glycosylation" value="2 sites, 2 N-linked glycans (2 sites)"/>
</dbReference>
<dbReference type="iPTMnet" id="Q6P1D7"/>
<dbReference type="PhosphoSitePlus" id="Q6P1D7"/>
<dbReference type="jPOST" id="Q6P1D7"/>
<dbReference type="PaxDb" id="10090-ENSMUSP00000038871"/>
<dbReference type="PeptideAtlas" id="Q6P1D7"/>
<dbReference type="ProteomicsDB" id="257200"/>
<dbReference type="Pumba" id="Q6P1D7"/>
<dbReference type="Antibodypedia" id="24180">
    <property type="antibodies" value="84 antibodies from 13 providers"/>
</dbReference>
<dbReference type="Ensembl" id="ENSMUST00000040790.14">
    <property type="protein sequence ID" value="ENSMUSP00000038871.8"/>
    <property type="gene ID" value="ENSMUSG00000039738.17"/>
</dbReference>
<dbReference type="GeneID" id="52864"/>
<dbReference type="KEGG" id="mmu:52864"/>
<dbReference type="UCSC" id="uc007xzg.2">
    <property type="organism name" value="mouse"/>
</dbReference>
<dbReference type="AGR" id="MGI:106299"/>
<dbReference type="CTD" id="84464"/>
<dbReference type="MGI" id="MGI:106299">
    <property type="gene designation" value="Slx4"/>
</dbReference>
<dbReference type="VEuPathDB" id="HostDB:ENSMUSG00000039738"/>
<dbReference type="eggNOG" id="ENOG502R4G8">
    <property type="taxonomic scope" value="Eukaryota"/>
</dbReference>
<dbReference type="GeneTree" id="ENSGT00390000014091"/>
<dbReference type="HOGENOM" id="CLU_003520_0_0_1"/>
<dbReference type="InParanoid" id="Q6P1D7"/>
<dbReference type="OMA" id="TKGPRHQ"/>
<dbReference type="OrthoDB" id="5576441at2759"/>
<dbReference type="PhylomeDB" id="Q6P1D7"/>
<dbReference type="TreeFam" id="TF106446"/>
<dbReference type="Reactome" id="R-MMU-5693568">
    <property type="pathway name" value="Resolution of D-loop Structures through Holliday Junction Intermediates"/>
</dbReference>
<dbReference type="Reactome" id="R-MMU-6783310">
    <property type="pathway name" value="Fanconi Anemia Pathway"/>
</dbReference>
<dbReference type="BioGRID-ORCS" id="52864">
    <property type="hits" value="9 hits in 113 CRISPR screens"/>
</dbReference>
<dbReference type="ChiTaRS" id="Slx4">
    <property type="organism name" value="mouse"/>
</dbReference>
<dbReference type="PRO" id="PR:Q6P1D7"/>
<dbReference type="Proteomes" id="UP000000589">
    <property type="component" value="Chromosome 16"/>
</dbReference>
<dbReference type="RNAct" id="Q6P1D7">
    <property type="molecule type" value="protein"/>
</dbReference>
<dbReference type="Bgee" id="ENSMUSG00000039738">
    <property type="expression patterns" value="Expressed in animal zygote and 124 other cell types or tissues"/>
</dbReference>
<dbReference type="ExpressionAtlas" id="Q6P1D7">
    <property type="expression patterns" value="baseline and differential"/>
</dbReference>
<dbReference type="GO" id="GO:0000785">
    <property type="term" value="C:chromatin"/>
    <property type="evidence" value="ECO:0007669"/>
    <property type="project" value="Ensembl"/>
</dbReference>
<dbReference type="GO" id="GO:0000781">
    <property type="term" value="C:chromosome, telomeric region"/>
    <property type="evidence" value="ECO:0000266"/>
    <property type="project" value="ComplexPortal"/>
</dbReference>
<dbReference type="GO" id="GO:0070522">
    <property type="term" value="C:ERCC4-ERCC1 complex"/>
    <property type="evidence" value="ECO:0007669"/>
    <property type="project" value="Ensembl"/>
</dbReference>
<dbReference type="GO" id="GO:0048476">
    <property type="term" value="C:Holliday junction resolvase complex"/>
    <property type="evidence" value="ECO:0007669"/>
    <property type="project" value="Ensembl"/>
</dbReference>
<dbReference type="GO" id="GO:0005654">
    <property type="term" value="C:nucleoplasm"/>
    <property type="evidence" value="ECO:0007669"/>
    <property type="project" value="Ensembl"/>
</dbReference>
<dbReference type="GO" id="GO:0033557">
    <property type="term" value="C:Slx1-Slx4 complex"/>
    <property type="evidence" value="ECO:0007669"/>
    <property type="project" value="Ensembl"/>
</dbReference>
<dbReference type="GO" id="GO:0003677">
    <property type="term" value="F:DNA binding"/>
    <property type="evidence" value="ECO:0007669"/>
    <property type="project" value="InterPro"/>
</dbReference>
<dbReference type="GO" id="GO:0008047">
    <property type="term" value="F:enzyme activator activity"/>
    <property type="evidence" value="ECO:0007669"/>
    <property type="project" value="Ensembl"/>
</dbReference>
<dbReference type="GO" id="GO:0008270">
    <property type="term" value="F:zinc ion binding"/>
    <property type="evidence" value="ECO:0007669"/>
    <property type="project" value="UniProtKB-KW"/>
</dbReference>
<dbReference type="GO" id="GO:0010792">
    <property type="term" value="P:DNA double-strand break processing involved in repair via single-strand annealing"/>
    <property type="evidence" value="ECO:0007669"/>
    <property type="project" value="Ensembl"/>
</dbReference>
<dbReference type="GO" id="GO:0006260">
    <property type="term" value="P:DNA replication"/>
    <property type="evidence" value="ECO:0007669"/>
    <property type="project" value="InterPro"/>
</dbReference>
<dbReference type="GO" id="GO:0000724">
    <property type="term" value="P:double-strand break repair via homologous recombination"/>
    <property type="evidence" value="ECO:0007669"/>
    <property type="project" value="Ensembl"/>
</dbReference>
<dbReference type="GO" id="GO:1904357">
    <property type="term" value="P:negative regulation of telomere maintenance via telomere lengthening"/>
    <property type="evidence" value="ECO:0007669"/>
    <property type="project" value="Ensembl"/>
</dbReference>
<dbReference type="GO" id="GO:0006289">
    <property type="term" value="P:nucleotide-excision repair"/>
    <property type="evidence" value="ECO:0007669"/>
    <property type="project" value="Ensembl"/>
</dbReference>
<dbReference type="GO" id="GO:1904431">
    <property type="term" value="P:positive regulation of t-circle formation"/>
    <property type="evidence" value="ECO:0000315"/>
    <property type="project" value="BHF-UCL"/>
</dbReference>
<dbReference type="GO" id="GO:0032206">
    <property type="term" value="P:positive regulation of telomere maintenance"/>
    <property type="evidence" value="ECO:0000266"/>
    <property type="project" value="ComplexPortal"/>
</dbReference>
<dbReference type="GO" id="GO:0072429">
    <property type="term" value="P:response to intra-S DNA damage checkpoint signaling"/>
    <property type="evidence" value="ECO:0000266"/>
    <property type="project" value="MGI"/>
</dbReference>
<dbReference type="GO" id="GO:0090656">
    <property type="term" value="P:t-circle formation"/>
    <property type="evidence" value="ECO:0000315"/>
    <property type="project" value="BHF-UCL"/>
</dbReference>
<dbReference type="GO" id="GO:0061820">
    <property type="term" value="P:telomeric D-loop disassembly"/>
    <property type="evidence" value="ECO:0007669"/>
    <property type="project" value="Ensembl"/>
</dbReference>
<dbReference type="CDD" id="cd22999">
    <property type="entry name" value="SAP_SLX4"/>
    <property type="match status" value="1"/>
</dbReference>
<dbReference type="FunFam" id="3.30.710.10:FF:000116">
    <property type="entry name" value="SLX4 structure-specific endonuclease subunit"/>
    <property type="match status" value="1"/>
</dbReference>
<dbReference type="Gene3D" id="3.30.710.10">
    <property type="entry name" value="Potassium Channel Kv1.1, Chain A"/>
    <property type="match status" value="1"/>
</dbReference>
<dbReference type="InterPro" id="IPR000210">
    <property type="entry name" value="BTB/POZ_dom"/>
</dbReference>
<dbReference type="InterPro" id="IPR006642">
    <property type="entry name" value="Rad18_UBZ4"/>
</dbReference>
<dbReference type="InterPro" id="IPR011333">
    <property type="entry name" value="SKP1/BTB/POZ_sf"/>
</dbReference>
<dbReference type="InterPro" id="IPR018574">
    <property type="entry name" value="Structure-sp_endonuc_su_Slx4"/>
</dbReference>
<dbReference type="PANTHER" id="PTHR21541">
    <property type="entry name" value="BTB POZ DOMAIN CONTAINING 12"/>
    <property type="match status" value="1"/>
</dbReference>
<dbReference type="PANTHER" id="PTHR21541:SF3">
    <property type="entry name" value="STRUCTURE-SPECIFIC ENDONUCLEASE SUBUNIT SLX4"/>
    <property type="match status" value="1"/>
</dbReference>
<dbReference type="Pfam" id="PF00651">
    <property type="entry name" value="BTB"/>
    <property type="match status" value="1"/>
</dbReference>
<dbReference type="Pfam" id="PF09494">
    <property type="entry name" value="Slx4"/>
    <property type="match status" value="1"/>
</dbReference>
<dbReference type="SMART" id="SM00225">
    <property type="entry name" value="BTB"/>
    <property type="match status" value="1"/>
</dbReference>
<dbReference type="SUPFAM" id="SSF54695">
    <property type="entry name" value="POZ domain"/>
    <property type="match status" value="1"/>
</dbReference>
<dbReference type="PROSITE" id="PS50097">
    <property type="entry name" value="BTB"/>
    <property type="match status" value="1"/>
</dbReference>
<dbReference type="PROSITE" id="PS51908">
    <property type="entry name" value="ZF_UBZ4"/>
    <property type="match status" value="2"/>
</dbReference>
<organism>
    <name type="scientific">Mus musculus</name>
    <name type="common">Mouse</name>
    <dbReference type="NCBI Taxonomy" id="10090"/>
    <lineage>
        <taxon>Eukaryota</taxon>
        <taxon>Metazoa</taxon>
        <taxon>Chordata</taxon>
        <taxon>Craniata</taxon>
        <taxon>Vertebrata</taxon>
        <taxon>Euteleostomi</taxon>
        <taxon>Mammalia</taxon>
        <taxon>Eutheria</taxon>
        <taxon>Euarchontoglires</taxon>
        <taxon>Glires</taxon>
        <taxon>Rodentia</taxon>
        <taxon>Myomorpha</taxon>
        <taxon>Muroidea</taxon>
        <taxon>Muridae</taxon>
        <taxon>Murinae</taxon>
        <taxon>Mus</taxon>
        <taxon>Mus</taxon>
    </lineage>
</organism>
<sequence length="1565" mass="172412">MVPESAPNGNSQPLPSCFTTTGVPSPSKPRVSELVLQRMKQFKRADPERLRHASEESPQKTALGDDVPRSPPEETVGENEYKLDATDSDAAMALALQQEFRREEASSHHDSLEEKGLFFCQMCQKNLSAMNVTRREQHVNRCLDEAEKAQRPASPRIPDCPICGKPFLTTKSRISHLKQCAVRMEVGPQLLLQAVRLQTAQPEVDGSPQVPSFSNNVGGLKRKGVTTKREPRRRKVNKPEAPSEDLLVAMALSRSEVEHCPVVPPLRLENAFSEKIRLGAEKKSRKKRPPVCPPQLVTQDSETTGRQIEDRVAQLLSEEAELSCTPPLLASKISKEELEPAGWRARLPEGKRNFLWELSALTGAWAEESFYTVGLFPPIVSQCPSKEPQLPLELPKQGEPSPRRPPASQSSLPVSHSPKIRLLSSSQRERQALQDLVDLAVEGLSSSPQPGSRGVPTGLDLVPSSLPLTGFVLPCKKTLKKDDSASLSLGLLVTDFGAMVNNPHLSDVQFQLDSGEVLYAHKFVLYARCPLLIQYVSTESFSSEEDGDLTQRALLSDVSSEAAHAFLNYLYMADTDMPPSLVPDLRSLALRFGVSDLVQLCEQVPAVVDLEGEQPEETSEDCESRAETFLELLRSVWVDNEEEVETLLKPELCEEERERVNEAEMEEIYEFAATQRKLLQWGRAADPDGSTNPHGEDGAVSEPSLAGVQSNRQLENTEHMESSGLEKEEALASWEQEGHSTPLQDQCPDWAGKAEAQDALGEATDDPSFCSRHRRGKECLPLHPNKAHGCKQPLPSNPRVSSELSQITVDHEEQSDHVRETQADMAQAPTPHSCSLVSQSSVDGSPSQSWLHLYHTSHLSPSVSQSHSSISRVASPRSLSPTTPTKQRRGSNIVTLRKDAGHHRGQQSSPIAGHRNRGILISPAKSPPIDLTQSVPEPLSPRAQDPLHFVKKEDEVILLLDSDEELEHTKTESVSKDSPEGRKVPEFSPRSSELFSVIDVEEDHEHFQSPLKREAGLQHGEEGQLGNQSALGCRDIPWLLCSQKTSLDEDSATDTSWLVPATPGVSRSRDCSSQTQIKSLKTRIPSDETAQQTPRPNLERRTMLETAQQFSVIMPHTQPITLGAFDSGRQAYRSPSHPYPRHHRLSSSQPSCPGPDFTRWSQKSSAPRPCLPNLPAADDVVEVGDSDDEVASHQGNSSPVLDGDPPGPMGDYCWNEPLSPIPIDHLNLERTGPLTTSSPSSQVLEALHSDDCHSPGLGTTPIRGSCGTLRESQERSSLAGSPEALWDDWNEEEGQSPEAPPVAQMLSTRTRKPDRPETPKGANQKKNLPPKVPITPMPRYSIMETPVLKKELDRFGVRALPKRQMVLKLKEIFQYTHQTLESDSEDEVQSPQIPAELPCRQASTTETCNPSRLPTGEPSHPDGDAQLPASQESMATSVDGSDNSFSSKSSSAEFGAAFEYSDEDKDEEVGVTASQAAIQAADTEEAVRRYIRSKPALHRQVLRYQPVELAELQAELKQNGIPVAMGKLSDILDAQCITFTTAAARKEKLKHKRRQPSGRKKKDQK</sequence>
<reference key="1">
    <citation type="journal article" date="2004" name="Genome Res.">
        <title>The status, quality, and expansion of the NIH full-length cDNA project: the Mammalian Gene Collection (MGC).</title>
        <authorList>
            <consortium name="The MGC Project Team"/>
        </authorList>
    </citation>
    <scope>NUCLEOTIDE SEQUENCE [LARGE SCALE MRNA]</scope>
    <source>
        <strain>C57BL/6J</strain>
        <tissue>Brain</tissue>
    </source>
</reference>
<reference key="2">
    <citation type="journal article" date="2010" name="Cell">
        <title>A tissue-specific atlas of mouse protein phosphorylation and expression.</title>
        <authorList>
            <person name="Huttlin E.L."/>
            <person name="Jedrychowski M.P."/>
            <person name="Elias J.E."/>
            <person name="Goswami T."/>
            <person name="Rad R."/>
            <person name="Beausoleil S.A."/>
            <person name="Villen J."/>
            <person name="Haas W."/>
            <person name="Sowa M.E."/>
            <person name="Gygi S.P."/>
        </authorList>
    </citation>
    <scope>PHOSPHORYLATION [LARGE SCALE ANALYSIS] AT SER-926; SER-940; SER-1249; SER-1254 AND SER-1384</scope>
    <scope>IDENTIFICATION BY MASS SPECTROMETRY [LARGE SCALE ANALYSIS]</scope>
    <source>
        <tissue>Brain</tissue>
        <tissue>Kidney</tissue>
        <tissue>Lung</tissue>
        <tissue>Pancreas</tissue>
        <tissue>Testis</tissue>
    </source>
</reference>
<reference key="3">
    <citation type="journal article" date="2013" name="Hum. Mutat.">
        <title>Analysis of the novel Fanconi anemia gene SLX4/FANCP in familial breast cancer cases.</title>
        <authorList>
            <person name="Bakker J.L."/>
            <person name="van Mil S.E."/>
            <person name="Crossan G."/>
            <person name="Sabbaghian N."/>
            <person name="De Leeneer K."/>
            <person name="Poppe B."/>
            <person name="Adank M."/>
            <person name="Gille H."/>
            <person name="Verheul H."/>
            <person name="Meijers-Heijboer H."/>
            <person name="de Winter J.P."/>
            <person name="Claes K."/>
            <person name="Tischkowitz M."/>
            <person name="Waisfisz Q."/>
        </authorList>
    </citation>
    <scope>MUTAGENESIS OF PRO-202; GLU-602; GLN-1324 AND ARG-1545</scope>
</reference>
<reference key="4">
    <citation type="journal article" date="2016" name="PLoS ONE">
        <title>The GIY-YIG type endonuclease ankyrin repeat and LEM domain-containing protein 1 (ANKLE1) is dispensable for mouse hematopoiesis.</title>
        <authorList>
            <person name="Braun J."/>
            <person name="Meixner A."/>
            <person name="Brachner A."/>
            <person name="Foisner R."/>
        </authorList>
    </citation>
    <scope>TISSUE SPECIFICITY</scope>
</reference>
<feature type="chain" id="PRO_0000383567" description="Structure-specific endonuclease subunit SLX4">
    <location>
        <begin position="1"/>
        <end position="1565"/>
    </location>
</feature>
<feature type="domain" description="BTB" evidence="3">
    <location>
        <begin position="506"/>
        <end position="579"/>
    </location>
</feature>
<feature type="zinc finger region" description="UBZ4-type 1" evidence="4">
    <location>
        <begin position="117"/>
        <end position="147"/>
    </location>
</feature>
<feature type="zinc finger region" description="UBZ4-type 2" evidence="4">
    <location>
        <begin position="157"/>
        <end position="185"/>
    </location>
</feature>
<feature type="region of interest" description="Disordered" evidence="5">
    <location>
        <begin position="1"/>
        <end position="87"/>
    </location>
</feature>
<feature type="region of interest" description="Disordered" evidence="5">
    <location>
        <begin position="203"/>
        <end position="242"/>
    </location>
</feature>
<feature type="region of interest" description="Disordered" evidence="5">
    <location>
        <begin position="279"/>
        <end position="305"/>
    </location>
</feature>
<feature type="region of interest" description="Disordered" evidence="5">
    <location>
        <begin position="387"/>
        <end position="418"/>
    </location>
</feature>
<feature type="region of interest" description="Interaction with PLK1 and TERF2-TERF2IP" evidence="1">
    <location>
        <begin position="499"/>
        <end position="1565"/>
    </location>
</feature>
<feature type="region of interest" description="Disordered" evidence="5">
    <location>
        <begin position="683"/>
        <end position="769"/>
    </location>
</feature>
<feature type="region of interest" description="Disordered" evidence="5">
    <location>
        <begin position="789"/>
        <end position="848"/>
    </location>
</feature>
<feature type="region of interest" description="Disordered" evidence="5">
    <location>
        <begin position="861"/>
        <end position="943"/>
    </location>
</feature>
<feature type="region of interest" description="Disordered" evidence="5">
    <location>
        <begin position="963"/>
        <end position="989"/>
    </location>
</feature>
<feature type="region of interest" description="Disordered" evidence="5">
    <location>
        <begin position="1063"/>
        <end position="1099"/>
    </location>
</feature>
<feature type="region of interest" description="Interaction with MUS81" evidence="1">
    <location>
        <begin position="1120"/>
        <end position="1413"/>
    </location>
</feature>
<feature type="region of interest" description="Disordered" evidence="5">
    <location>
        <begin position="1128"/>
        <end position="1212"/>
    </location>
</feature>
<feature type="region of interest" description="Disordered" evidence="5">
    <location>
        <begin position="1249"/>
        <end position="1337"/>
    </location>
</feature>
<feature type="region of interest" description="Disordered" evidence="5">
    <location>
        <begin position="1381"/>
        <end position="1449"/>
    </location>
</feature>
<feature type="region of interest" description="Interaction with SLX1" evidence="1">
    <location>
        <begin position="1406"/>
        <end position="1565"/>
    </location>
</feature>
<feature type="region of interest" description="Disordered" evidence="5">
    <location>
        <begin position="1546"/>
        <end position="1565"/>
    </location>
</feature>
<feature type="compositionally biased region" description="Polar residues" evidence="5">
    <location>
        <begin position="7"/>
        <end position="24"/>
    </location>
</feature>
<feature type="compositionally biased region" description="Basic and acidic residues" evidence="5">
    <location>
        <begin position="43"/>
        <end position="58"/>
    </location>
</feature>
<feature type="compositionally biased region" description="Basic residues" evidence="5">
    <location>
        <begin position="220"/>
        <end position="236"/>
    </location>
</feature>
<feature type="compositionally biased region" description="Polar residues" evidence="5">
    <location>
        <begin position="296"/>
        <end position="305"/>
    </location>
</feature>
<feature type="compositionally biased region" description="Basic and acidic residues" evidence="5">
    <location>
        <begin position="715"/>
        <end position="730"/>
    </location>
</feature>
<feature type="compositionally biased region" description="Polar residues" evidence="5">
    <location>
        <begin position="798"/>
        <end position="808"/>
    </location>
</feature>
<feature type="compositionally biased region" description="Basic and acidic residues" evidence="5">
    <location>
        <begin position="809"/>
        <end position="822"/>
    </location>
</feature>
<feature type="compositionally biased region" description="Low complexity" evidence="5">
    <location>
        <begin position="833"/>
        <end position="848"/>
    </location>
</feature>
<feature type="compositionally biased region" description="Low complexity" evidence="5">
    <location>
        <begin position="861"/>
        <end position="875"/>
    </location>
</feature>
<feature type="compositionally biased region" description="Polar residues" evidence="5">
    <location>
        <begin position="877"/>
        <end position="894"/>
    </location>
</feature>
<feature type="compositionally biased region" description="Basic and acidic residues" evidence="5">
    <location>
        <begin position="967"/>
        <end position="985"/>
    </location>
</feature>
<feature type="compositionally biased region" description="Acidic residues" evidence="5">
    <location>
        <begin position="1179"/>
        <end position="1189"/>
    </location>
</feature>
<feature type="compositionally biased region" description="Acidic residues" evidence="5">
    <location>
        <begin position="1285"/>
        <end position="1295"/>
    </location>
</feature>
<feature type="compositionally biased region" description="Polar residues" evidence="5">
    <location>
        <begin position="1401"/>
        <end position="1412"/>
    </location>
</feature>
<feature type="compositionally biased region" description="Low complexity" evidence="5">
    <location>
        <begin position="1437"/>
        <end position="1449"/>
    </location>
</feature>
<feature type="compositionally biased region" description="Basic residues" evidence="5">
    <location>
        <begin position="1547"/>
        <end position="1565"/>
    </location>
</feature>
<feature type="binding site" evidence="4">
    <location>
        <position position="120"/>
    </location>
    <ligand>
        <name>Zn(2+)</name>
        <dbReference type="ChEBI" id="CHEBI:29105"/>
        <label>1</label>
    </ligand>
</feature>
<feature type="binding site" evidence="4">
    <location>
        <position position="123"/>
    </location>
    <ligand>
        <name>Zn(2+)</name>
        <dbReference type="ChEBI" id="CHEBI:29105"/>
        <label>1</label>
    </ligand>
</feature>
<feature type="binding site" evidence="4">
    <location>
        <position position="138"/>
    </location>
    <ligand>
        <name>Zn(2+)</name>
        <dbReference type="ChEBI" id="CHEBI:29105"/>
        <label>1</label>
    </ligand>
</feature>
<feature type="binding site" evidence="4">
    <location>
        <position position="142"/>
    </location>
    <ligand>
        <name>Zn(2+)</name>
        <dbReference type="ChEBI" id="CHEBI:29105"/>
        <label>1</label>
    </ligand>
</feature>
<feature type="binding site" evidence="4">
    <location>
        <position position="160"/>
    </location>
    <ligand>
        <name>Zn(2+)</name>
        <dbReference type="ChEBI" id="CHEBI:29105"/>
        <label>2</label>
    </ligand>
</feature>
<feature type="binding site" evidence="4">
    <location>
        <position position="163"/>
    </location>
    <ligand>
        <name>Zn(2+)</name>
        <dbReference type="ChEBI" id="CHEBI:29105"/>
        <label>2</label>
    </ligand>
</feature>
<feature type="binding site" evidence="4">
    <location>
        <position position="176"/>
    </location>
    <ligand>
        <name>Zn(2+)</name>
        <dbReference type="ChEBI" id="CHEBI:29105"/>
        <label>2</label>
    </ligand>
</feature>
<feature type="binding site" evidence="4">
    <location>
        <position position="180"/>
    </location>
    <ligand>
        <name>Zn(2+)</name>
        <dbReference type="ChEBI" id="CHEBI:29105"/>
        <label>2</label>
    </ligand>
</feature>
<feature type="modified residue" description="Phosphoserine" evidence="2">
    <location>
        <position position="111"/>
    </location>
</feature>
<feature type="modified residue" description="Phosphoserine" evidence="2">
    <location>
        <position position="845"/>
    </location>
</feature>
<feature type="modified residue" description="Phosphoserine" evidence="2">
    <location>
        <position position="875"/>
    </location>
</feature>
<feature type="modified residue" description="Phosphoserine" evidence="9">
    <location>
        <position position="926"/>
    </location>
</feature>
<feature type="modified residue" description="Phosphoserine" evidence="9">
    <location>
        <position position="940"/>
    </location>
</feature>
<feature type="modified residue" description="Phosphoserine" evidence="2">
    <location>
        <position position="988"/>
    </location>
</feature>
<feature type="modified residue" description="Phosphoserine" evidence="9">
    <location>
        <position position="1249"/>
    </location>
</feature>
<feature type="modified residue" description="Phosphoserine" evidence="9">
    <location>
        <position position="1254"/>
    </location>
</feature>
<feature type="modified residue" description="Phosphoserine" evidence="9">
    <location>
        <position position="1384"/>
    </location>
</feature>
<feature type="cross-link" description="Glycyl lysine isopeptide (Lys-Gly) (interchain with G-Cter in SUMO2)" evidence="2">
    <location>
        <position position="115"/>
    </location>
</feature>
<feature type="cross-link" description="Glycyl lysine isopeptide (Lys-Gly) (interchain with G-Cter in SUMO2)" evidence="2">
    <location>
        <position position="171"/>
    </location>
</feature>
<feature type="cross-link" description="Glycyl lysine isopeptide (Lys-Gly) (interchain with G-Cter in SUMO2)" evidence="2">
    <location>
        <position position="283"/>
    </location>
</feature>
<feature type="cross-link" description="Glycyl lysine isopeptide (Lys-Gly) (interchain with G-Cter in SUMO2)" evidence="2">
    <location>
        <position position="649"/>
    </location>
</feature>
<feature type="cross-link" description="Glycyl lysine isopeptide (Lys-Gly) (interchain with G-Cter in SUMO2)" evidence="2">
    <location>
        <position position="886"/>
    </location>
</feature>
<feature type="cross-link" description="Glycyl lysine isopeptide (Lys-Gly) (interchain with G-Cter in SUMO2)" evidence="2">
    <location>
        <position position="898"/>
    </location>
</feature>
<feature type="cross-link" description="Glycyl lysine isopeptide (Lys-Gly) (interchain with G-Cter in SUMO2)" evidence="2">
    <location>
        <position position="925"/>
    </location>
</feature>
<feature type="cross-link" description="Glycyl lysine isopeptide (Lys-Gly) (interchain with G-Cter in SUMO2)" evidence="2">
    <location>
        <position position="983"/>
    </location>
</feature>
<feature type="cross-link" description="Glycyl lysine isopeptide (Lys-Gly) (interchain with G-Cter in SUMO2)" evidence="2">
    <location>
        <position position="1349"/>
    </location>
</feature>
<feature type="cross-link" description="Glycyl lysine isopeptide (Lys-Gly) (interchain with G-Cter in SUMO2)" evidence="2">
    <location>
        <position position="1350"/>
    </location>
</feature>
<feature type="mutagenesis site" description="Does not modify the functional properties of the protein." evidence="6">
    <original>P</original>
    <variation>T</variation>
    <location>
        <position position="202"/>
    </location>
</feature>
<feature type="mutagenesis site" description="Does not modify the functional properties of the protein." evidence="6">
    <original>E</original>
    <variation>K</variation>
    <location>
        <position position="602"/>
    </location>
</feature>
<feature type="mutagenesis site" description="Does not modify the functional properties of the protein." evidence="6">
    <original>Q</original>
    <variation>W</variation>
    <location>
        <position position="1324"/>
    </location>
</feature>
<feature type="mutagenesis site" description="Does not modify the functional properties of the protein." evidence="6">
    <original>R</original>
    <variation>C</variation>
    <location>
        <position position="1545"/>
    </location>
</feature>
<name>SLX4_MOUSE</name>
<evidence type="ECO:0000250" key="1"/>
<evidence type="ECO:0000250" key="2">
    <source>
        <dbReference type="UniProtKB" id="Q8IY92"/>
    </source>
</evidence>
<evidence type="ECO:0000255" key="3">
    <source>
        <dbReference type="PROSITE-ProRule" id="PRU00037"/>
    </source>
</evidence>
<evidence type="ECO:0000255" key="4">
    <source>
        <dbReference type="PROSITE-ProRule" id="PRU01256"/>
    </source>
</evidence>
<evidence type="ECO:0000256" key="5">
    <source>
        <dbReference type="SAM" id="MobiDB-lite"/>
    </source>
</evidence>
<evidence type="ECO:0000269" key="6">
    <source>
    </source>
</evidence>
<evidence type="ECO:0000269" key="7">
    <source>
    </source>
</evidence>
<evidence type="ECO:0000305" key="8"/>
<evidence type="ECO:0007744" key="9">
    <source>
    </source>
</evidence>
<proteinExistence type="evidence at protein level"/>
<comment type="function">
    <text evidence="1">Regulatory subunit that interacts with and increases the activity of different structure-specific endonucleases. Has several distinct roles in protecting genome stability by resolving diverse forms of deleterious DNA structures originating from replication and recombination intermediates and from DNA damage. Component of the SLX1-SLX4 structure-specific endonuclease that resolves DNA secondary structures generated during DNA repair and recombination. Has endonuclease activity towards branched DNA substrates, introducing single-strand cuts in duplex DNA close to junctions with ss-DNA. Has a preference for 5'-flap structures, and promotes symmetrical cleavage of static and migrating Holliday junctions (HJs). Resolves HJs by generating two pairs of ligatable, nicked duplex products. Interacts with the structure-specific ERCC4-ERCC1 endonuclease and promotes the cleavage of bubble structures. Interacts with the structure-specific MUS81-EME1 endonuclease and promotes the cleavage of 3'-flap and replication fork-like structures. SLX4 is required for recovery from alkylation-induced DNA damage and is involved in the resolution of DNA double-strand breaks (By similarity).</text>
</comment>
<comment type="subunit">
    <text evidence="2">Forms a heterodimer with SLX1A/GIYD1. Interacts with ERCC4/XPF; catalytic subunit of the ERCC4-ERCC1 endonuclease. Interacts with MUS81; catalytic subunit of the MUS81-EME1 endonuclease. Interacts with MSH2; component of the MSH2-MSH3 mismatch repair complex. Interacts with TERF2-TERF2IP. Interacts with PLK1 and SLX4IP (By similarity).</text>
</comment>
<comment type="subcellular location">
    <subcellularLocation>
        <location evidence="2">Nucleus</location>
    </subcellularLocation>
    <text evidence="2">Localizes to sites of DNA damage.</text>
</comment>
<comment type="tissue specificity">
    <text evidence="7">Highly expressed in testis. Expressed in bone marrow, brain, thymus and weakly in heart, kidney and spleen.</text>
</comment>
<comment type="similarity">
    <text evidence="8">Belongs to the SLX4 family.</text>
</comment>
<protein>
    <recommendedName>
        <fullName>Structure-specific endonuclease subunit SLX4</fullName>
    </recommendedName>
    <alternativeName>
        <fullName>BTB/POZ domain-containing protein 12</fullName>
    </alternativeName>
</protein>
<accession>Q6P1D7</accession>